<gene>
    <name type="primary">OGFOD1</name>
</gene>
<accession>Q3MI03</accession>
<organism>
    <name type="scientific">Bos taurus</name>
    <name type="common">Bovine</name>
    <dbReference type="NCBI Taxonomy" id="9913"/>
    <lineage>
        <taxon>Eukaryota</taxon>
        <taxon>Metazoa</taxon>
        <taxon>Chordata</taxon>
        <taxon>Craniata</taxon>
        <taxon>Vertebrata</taxon>
        <taxon>Euteleostomi</taxon>
        <taxon>Mammalia</taxon>
        <taxon>Eutheria</taxon>
        <taxon>Laurasiatheria</taxon>
        <taxon>Artiodactyla</taxon>
        <taxon>Ruminantia</taxon>
        <taxon>Pecora</taxon>
        <taxon>Bovidae</taxon>
        <taxon>Bovinae</taxon>
        <taxon>Bos</taxon>
    </lineage>
</organism>
<feature type="chain" id="PRO_0000288973" description="Prolyl 3-hydroxylase OGFOD1">
    <location>
        <begin position="1"/>
        <end position="542"/>
    </location>
</feature>
<feature type="domain" description="Fe2OG dioxygenase" evidence="3">
    <location>
        <begin position="134"/>
        <end position="239"/>
    </location>
</feature>
<feature type="region of interest" description="Disordered" evidence="4">
    <location>
        <begin position="371"/>
        <end position="435"/>
    </location>
</feature>
<feature type="compositionally biased region" description="Polar residues" evidence="4">
    <location>
        <begin position="395"/>
        <end position="417"/>
    </location>
</feature>
<feature type="binding site" evidence="1 3">
    <location>
        <position position="155"/>
    </location>
    <ligand>
        <name>Fe cation</name>
        <dbReference type="ChEBI" id="CHEBI:24875"/>
    </ligand>
</feature>
<feature type="binding site" evidence="3">
    <location>
        <position position="157"/>
    </location>
    <ligand>
        <name>Fe cation</name>
        <dbReference type="ChEBI" id="CHEBI:24875"/>
    </ligand>
</feature>
<feature type="binding site" evidence="1">
    <location>
        <position position="169"/>
    </location>
    <ligand>
        <name>2-oxoglutarate</name>
        <dbReference type="ChEBI" id="CHEBI:16810"/>
    </ligand>
</feature>
<feature type="binding site" evidence="1 3">
    <location>
        <position position="218"/>
    </location>
    <ligand>
        <name>Fe cation</name>
        <dbReference type="ChEBI" id="CHEBI:24875"/>
    </ligand>
</feature>
<feature type="binding site" evidence="1 3">
    <location>
        <position position="230"/>
    </location>
    <ligand>
        <name>2-oxoglutarate</name>
        <dbReference type="ChEBI" id="CHEBI:16810"/>
    </ligand>
</feature>
<feature type="sequence conflict" description="In Ref. 1; EE245591." evidence="5" ref="1">
    <original>W</original>
    <variation>G</variation>
    <location>
        <position position="269"/>
    </location>
</feature>
<dbReference type="EC" id="1.14.11.-"/>
<dbReference type="EMBL" id="BC104499">
    <property type="protein sequence ID" value="AAI04500.1"/>
    <property type="molecule type" value="mRNA"/>
</dbReference>
<dbReference type="EMBL" id="EE245591">
    <property type="status" value="NOT_ANNOTATED_CDS"/>
    <property type="molecule type" value="mRNA"/>
</dbReference>
<dbReference type="RefSeq" id="NP_001160085.1">
    <property type="nucleotide sequence ID" value="NM_001166613.1"/>
</dbReference>
<dbReference type="SMR" id="Q3MI03"/>
<dbReference type="FunCoup" id="Q3MI03">
    <property type="interactions" value="2938"/>
</dbReference>
<dbReference type="STRING" id="9913.ENSBTAP00000032330"/>
<dbReference type="PaxDb" id="9913-ENSBTAP00000032330"/>
<dbReference type="GeneID" id="514141"/>
<dbReference type="KEGG" id="bta:514141"/>
<dbReference type="CTD" id="55239"/>
<dbReference type="VEuPathDB" id="HostDB:ENSBTAG00000001171"/>
<dbReference type="eggNOG" id="KOG3844">
    <property type="taxonomic scope" value="Eukaryota"/>
</dbReference>
<dbReference type="HOGENOM" id="CLU_027679_0_0_1"/>
<dbReference type="InParanoid" id="Q3MI03"/>
<dbReference type="OMA" id="HDHEILY"/>
<dbReference type="OrthoDB" id="430522at2759"/>
<dbReference type="TreeFam" id="TF105920"/>
<dbReference type="Reactome" id="R-BTA-9629569">
    <property type="pathway name" value="Protein hydroxylation"/>
</dbReference>
<dbReference type="Proteomes" id="UP000009136">
    <property type="component" value="Chromosome 18"/>
</dbReference>
<dbReference type="Bgee" id="ENSBTAG00000001171">
    <property type="expression patterns" value="Expressed in oocyte and 106 other cell types or tissues"/>
</dbReference>
<dbReference type="GO" id="GO:0005737">
    <property type="term" value="C:cytoplasm"/>
    <property type="evidence" value="ECO:0000318"/>
    <property type="project" value="GO_Central"/>
</dbReference>
<dbReference type="GO" id="GO:0010494">
    <property type="term" value="C:cytoplasmic stress granule"/>
    <property type="evidence" value="ECO:0000250"/>
    <property type="project" value="UniProtKB"/>
</dbReference>
<dbReference type="GO" id="GO:0005634">
    <property type="term" value="C:nucleus"/>
    <property type="evidence" value="ECO:0007669"/>
    <property type="project" value="UniProtKB-SubCell"/>
</dbReference>
<dbReference type="GO" id="GO:0005506">
    <property type="term" value="F:iron ion binding"/>
    <property type="evidence" value="ECO:0007669"/>
    <property type="project" value="InterPro"/>
</dbReference>
<dbReference type="GO" id="GO:0031418">
    <property type="term" value="F:L-ascorbic acid binding"/>
    <property type="evidence" value="ECO:0007669"/>
    <property type="project" value="UniProtKB-KW"/>
</dbReference>
<dbReference type="GO" id="GO:0031544">
    <property type="term" value="F:peptidyl-proline 3-dioxygenase activity"/>
    <property type="evidence" value="ECO:0000250"/>
    <property type="project" value="UniProtKB"/>
</dbReference>
<dbReference type="GO" id="GO:0031543">
    <property type="term" value="F:peptidyl-proline dioxygenase activity"/>
    <property type="evidence" value="ECO:0000250"/>
    <property type="project" value="UniProtKB"/>
</dbReference>
<dbReference type="GO" id="GO:0008283">
    <property type="term" value="P:cell population proliferation"/>
    <property type="evidence" value="ECO:0000250"/>
    <property type="project" value="UniProtKB"/>
</dbReference>
<dbReference type="GO" id="GO:0018126">
    <property type="term" value="P:protein hydroxylation"/>
    <property type="evidence" value="ECO:0000250"/>
    <property type="project" value="UniProtKB"/>
</dbReference>
<dbReference type="GO" id="GO:0006449">
    <property type="term" value="P:regulation of translational termination"/>
    <property type="evidence" value="ECO:0000250"/>
    <property type="project" value="UniProtKB"/>
</dbReference>
<dbReference type="GO" id="GO:0034063">
    <property type="term" value="P:stress granule assembly"/>
    <property type="evidence" value="ECO:0000250"/>
    <property type="project" value="UniProtKB"/>
</dbReference>
<dbReference type="FunFam" id="2.60.120.620:FF:000010">
    <property type="entry name" value="Prolyl 3-hydroxylase OGFOD1 isoform 1"/>
    <property type="match status" value="1"/>
</dbReference>
<dbReference type="Gene3D" id="2.60.120.620">
    <property type="entry name" value="q2cbj1_9rhob like domain"/>
    <property type="match status" value="2"/>
</dbReference>
<dbReference type="InterPro" id="IPR005123">
    <property type="entry name" value="Oxoglu/Fe-dep_dioxygenase_dom"/>
</dbReference>
<dbReference type="InterPro" id="IPR019601">
    <property type="entry name" value="Oxoglutarate/Fe-dep_Oase_C"/>
</dbReference>
<dbReference type="InterPro" id="IPR006620">
    <property type="entry name" value="Pro_4_hyd_alph"/>
</dbReference>
<dbReference type="InterPro" id="IPR039558">
    <property type="entry name" value="TPA1/OFD1_N"/>
</dbReference>
<dbReference type="InterPro" id="IPR051842">
    <property type="entry name" value="uS12_prolyl_hydroxylase"/>
</dbReference>
<dbReference type="PANTHER" id="PTHR12117">
    <property type="entry name" value="HISTONE ACETYLTRANSFERASE COMPLEX"/>
    <property type="match status" value="1"/>
</dbReference>
<dbReference type="PANTHER" id="PTHR12117:SF0">
    <property type="entry name" value="PROLYL 3-HYDROXYLASE OGFOD1"/>
    <property type="match status" value="1"/>
</dbReference>
<dbReference type="Pfam" id="PF13661">
    <property type="entry name" value="2OG-FeII_Oxy_4"/>
    <property type="match status" value="1"/>
</dbReference>
<dbReference type="Pfam" id="PF10637">
    <property type="entry name" value="Ofd1_CTDD"/>
    <property type="match status" value="1"/>
</dbReference>
<dbReference type="SMART" id="SM00702">
    <property type="entry name" value="P4Hc"/>
    <property type="match status" value="1"/>
</dbReference>
<dbReference type="PROSITE" id="PS51471">
    <property type="entry name" value="FE2OG_OXY"/>
    <property type="match status" value="1"/>
</dbReference>
<proteinExistence type="evidence at transcript level"/>
<reference key="1">
    <citation type="submission" date="2005-09" db="EMBL/GenBank/DDBJ databases">
        <authorList>
            <consortium name="NIH - Mammalian Gene Collection (MGC) project"/>
        </authorList>
    </citation>
    <scope>NUCLEOTIDE SEQUENCE [LARGE SCALE MRNA]</scope>
    <source>
        <strain>Hereford</strain>
        <tissue>Uterus</tissue>
    </source>
</reference>
<keyword id="KW-0963">Cytoplasm</keyword>
<keyword id="KW-0223">Dioxygenase</keyword>
<keyword id="KW-0408">Iron</keyword>
<keyword id="KW-0479">Metal-binding</keyword>
<keyword id="KW-0539">Nucleus</keyword>
<keyword id="KW-0560">Oxidoreductase</keyword>
<keyword id="KW-1185">Reference proteome</keyword>
<keyword id="KW-0847">Vitamin C</keyword>
<protein>
    <recommendedName>
        <fullName>Prolyl 3-hydroxylase OGFOD1</fullName>
        <ecNumber>1.14.11.-</ecNumber>
    </recommendedName>
    <alternativeName>
        <fullName>2-oxoglutarate and iron-dependent oxygenase domain-containing protein 1</fullName>
    </alternativeName>
    <alternativeName>
        <fullName>uS12 prolyl 3-hydroxylase</fullName>
    </alternativeName>
</protein>
<name>OGFD1_BOVIN</name>
<comment type="function">
    <text evidence="2">Prolyl 3-hydroxylase that catalyzes 3-hydroxylation of 'Pro-62' of small ribosomal subunit uS12 (RPS23), thereby regulating protein translation termination efficiency. Involved in stress granule formation.</text>
</comment>
<comment type="catalytic activity">
    <reaction evidence="2">
        <text>[ribosomal protein uS12]-L-proline + 2-oxoglutarate + O2 = [ribosomal protein uS12]-(3S)-3-hydroxy-L-proline + succinate + CO2</text>
        <dbReference type="Rhea" id="RHEA:54156"/>
        <dbReference type="Rhea" id="RHEA-COMP:13816"/>
        <dbReference type="Rhea" id="RHEA-COMP:13818"/>
        <dbReference type="ChEBI" id="CHEBI:15379"/>
        <dbReference type="ChEBI" id="CHEBI:16526"/>
        <dbReference type="ChEBI" id="CHEBI:16810"/>
        <dbReference type="ChEBI" id="CHEBI:30031"/>
        <dbReference type="ChEBI" id="CHEBI:50342"/>
        <dbReference type="ChEBI" id="CHEBI:85428"/>
    </reaction>
</comment>
<comment type="cofactor">
    <cofactor evidence="3">
        <name>Fe(2+)</name>
        <dbReference type="ChEBI" id="CHEBI:29033"/>
    </cofactor>
    <text evidence="3">Binds 1 Fe(2+) ion per subunit.</text>
</comment>
<comment type="cofactor">
    <cofactor evidence="2">
        <name>L-ascorbate</name>
        <dbReference type="ChEBI" id="CHEBI:38290"/>
    </cofactor>
</comment>
<comment type="subunit">
    <text evidence="2">Monomer.</text>
</comment>
<comment type="subcellular location">
    <subcellularLocation>
        <location evidence="2">Cytoplasm</location>
    </subcellularLocation>
    <subcellularLocation>
        <location evidence="2">Nucleus</location>
    </subcellularLocation>
</comment>
<comment type="similarity">
    <text evidence="5">Belongs to the TPA1 family.</text>
</comment>
<evidence type="ECO:0000250" key="1">
    <source>
        <dbReference type="UniProtKB" id="P40032"/>
    </source>
</evidence>
<evidence type="ECO:0000250" key="2">
    <source>
        <dbReference type="UniProtKB" id="Q8N543"/>
    </source>
</evidence>
<evidence type="ECO:0000255" key="3">
    <source>
        <dbReference type="PROSITE-ProRule" id="PRU00805"/>
    </source>
</evidence>
<evidence type="ECO:0000256" key="4">
    <source>
        <dbReference type="SAM" id="MobiDB-lite"/>
    </source>
</evidence>
<evidence type="ECO:0000305" key="5"/>
<sequence>MNGKRPAEPGSDRAGKKVKKEVMAKFSDAVTEETLKKQVAEAWSRRTPFRHEAIVMDMDPFLHCVIPNFIQSQNFLEGLQKELLNLDFHEKYNDLYKFQQSDDLKKRREPHICALRKILFEHFRSWISDISKIDLESTIDMSCAKYEFSDALLCHDDELEGRRIAFILYLVPPWDASLGGTLDLFSVDEHFQPKQIVKSLIPSWNTLVFFEVSPVSFHQVSEVLSEEKSRLSISGWFHGPSLTRPPTYFEPLIARSPHIPQDHEILYDWINPTYLDMEYQAQIQEEFEESSEILLKEFLQPEKFAEVCEALERGRVEWSSRGPPNKRFYEKAEESQLPDILRDCMALFRSEAMFLLLSNFTGLKLHFLAPSEDEPEDKKERDAVSAAENTEEGTSHSSSEPENSWAATSDSSLQSEGPTDPEEDEAKKESSVPTCQGELRHWKTGHYTLIHDNSKTEFALDLLLYCGCEGWEPEYGGFTSYIAKGEDEELLTVNPENNSLALVYRDRETLKFVKHINHRSLEQKKSFPNRTGFWDFSFVYYE</sequence>